<organism>
    <name type="scientific">Treponema pallidum (strain Nichols)</name>
    <dbReference type="NCBI Taxonomy" id="243276"/>
    <lineage>
        <taxon>Bacteria</taxon>
        <taxon>Pseudomonadati</taxon>
        <taxon>Spirochaetota</taxon>
        <taxon>Spirochaetia</taxon>
        <taxon>Spirochaetales</taxon>
        <taxon>Treponemataceae</taxon>
        <taxon>Treponema</taxon>
    </lineage>
</organism>
<evidence type="ECO:0000255" key="1"/>
<evidence type="ECO:0000305" key="2"/>
<keyword id="KW-1003">Cell membrane</keyword>
<keyword id="KW-0472">Membrane</keyword>
<keyword id="KW-1185">Reference proteome</keyword>
<keyword id="KW-0812">Transmembrane</keyword>
<keyword id="KW-1133">Transmembrane helix</keyword>
<accession>O83183</accession>
<gene>
    <name type="ordered locus">TP_0148</name>
</gene>
<feature type="chain" id="PRO_0000202200" description="Uncharacterized protein TP_0148">
    <location>
        <begin position="1"/>
        <end position="192"/>
    </location>
</feature>
<feature type="transmembrane region" description="Helical" evidence="1">
    <location>
        <begin position="5"/>
        <end position="22"/>
    </location>
</feature>
<feature type="transmembrane region" description="Helical" evidence="1">
    <location>
        <begin position="42"/>
        <end position="61"/>
    </location>
</feature>
<feature type="transmembrane region" description="Helical" evidence="1">
    <location>
        <begin position="66"/>
        <end position="88"/>
    </location>
</feature>
<feature type="transmembrane region" description="Helical" evidence="1">
    <location>
        <begin position="101"/>
        <end position="118"/>
    </location>
</feature>
<feature type="transmembrane region" description="Helical" evidence="1">
    <location>
        <begin position="122"/>
        <end position="139"/>
    </location>
</feature>
<feature type="transmembrane region" description="Helical" evidence="1">
    <location>
        <begin position="159"/>
        <end position="181"/>
    </location>
</feature>
<protein>
    <recommendedName>
        <fullName>Uncharacterized protein TP_0148</fullName>
    </recommendedName>
</protein>
<proteinExistence type="predicted"/>
<dbReference type="EMBL" id="AE000520">
    <property type="protein sequence ID" value="AAC65140.1"/>
    <property type="molecule type" value="Genomic_DNA"/>
</dbReference>
<dbReference type="PIR" id="E71361">
    <property type="entry name" value="E71361"/>
</dbReference>
<dbReference type="RefSeq" id="WP_010881595.1">
    <property type="nucleotide sequence ID" value="NC_021490.2"/>
</dbReference>
<dbReference type="SMR" id="O83183"/>
<dbReference type="IntAct" id="O83183">
    <property type="interactions" value="2"/>
</dbReference>
<dbReference type="STRING" id="243276.TP_0148"/>
<dbReference type="EnsemblBacteria" id="AAC65140">
    <property type="protein sequence ID" value="AAC65140"/>
    <property type="gene ID" value="TP_0148"/>
</dbReference>
<dbReference type="KEGG" id="tpa:TP_0148"/>
<dbReference type="KEGG" id="tpw:TPANIC_0148"/>
<dbReference type="eggNOG" id="ENOG5032PC1">
    <property type="taxonomic scope" value="Bacteria"/>
</dbReference>
<dbReference type="HOGENOM" id="CLU_1433901_0_0_12"/>
<dbReference type="Proteomes" id="UP000000811">
    <property type="component" value="Chromosome"/>
</dbReference>
<dbReference type="GO" id="GO:0005886">
    <property type="term" value="C:plasma membrane"/>
    <property type="evidence" value="ECO:0007669"/>
    <property type="project" value="UniProtKB-SubCell"/>
</dbReference>
<name>Y148_TREPA</name>
<reference key="1">
    <citation type="journal article" date="1998" name="Science">
        <title>Complete genome sequence of Treponema pallidum, the syphilis spirochete.</title>
        <authorList>
            <person name="Fraser C.M."/>
            <person name="Norris S.J."/>
            <person name="Weinstock G.M."/>
            <person name="White O."/>
            <person name="Sutton G.G."/>
            <person name="Dodson R.J."/>
            <person name="Gwinn M.L."/>
            <person name="Hickey E.K."/>
            <person name="Clayton R.A."/>
            <person name="Ketchum K.A."/>
            <person name="Sodergren E."/>
            <person name="Hardham J.M."/>
            <person name="McLeod M.P."/>
            <person name="Salzberg S.L."/>
            <person name="Peterson J.D."/>
            <person name="Khalak H.G."/>
            <person name="Richardson D.L."/>
            <person name="Howell J.K."/>
            <person name="Chidambaram M."/>
            <person name="Utterback T.R."/>
            <person name="McDonald L.A."/>
            <person name="Artiach P."/>
            <person name="Bowman C."/>
            <person name="Cotton M.D."/>
            <person name="Fujii C."/>
            <person name="Garland S.A."/>
            <person name="Hatch B."/>
            <person name="Horst K."/>
            <person name="Roberts K.M."/>
            <person name="Sandusky M."/>
            <person name="Weidman J.F."/>
            <person name="Smith H.O."/>
            <person name="Venter J.C."/>
        </authorList>
    </citation>
    <scope>NUCLEOTIDE SEQUENCE [LARGE SCALE GENOMIC DNA]</scope>
    <source>
        <strain>Nichols</strain>
    </source>
</reference>
<comment type="subcellular location">
    <subcellularLocation>
        <location evidence="2">Cell membrane</location>
        <topology evidence="2">Multi-pass membrane protein</topology>
    </subcellularLocation>
</comment>
<sequence length="192" mass="21083">MVTMVPPLFFVCALFFAEGIGLDRLCIAALSPRCTLFHTCRFLFLGGILITGNWVCIHYVYDPLALRFLTPLGVGASAFCLSTCSGKLSRTCTSHRAQSEWGLLYALVFYITYTALNLFEALVMWGVSCVGFLCFSTILRAIHQRITQGNGTAVEKTAALLLASMGFIALSLYGTDELWLFPIPAAGMRTRL</sequence>